<dbReference type="EC" id="4.1.1.23" evidence="1"/>
<dbReference type="EMBL" id="BA000031">
    <property type="protein sequence ID" value="BAC60289.1"/>
    <property type="molecule type" value="Genomic_DNA"/>
</dbReference>
<dbReference type="RefSeq" id="NP_798405.1">
    <property type="nucleotide sequence ID" value="NC_004603.1"/>
</dbReference>
<dbReference type="RefSeq" id="WP_005481650.1">
    <property type="nucleotide sequence ID" value="NC_004603.1"/>
</dbReference>
<dbReference type="SMR" id="Q87N49"/>
<dbReference type="GeneID" id="1189537"/>
<dbReference type="KEGG" id="vpa:VP2026"/>
<dbReference type="PATRIC" id="fig|223926.6.peg.1937"/>
<dbReference type="eggNOG" id="COG0284">
    <property type="taxonomic scope" value="Bacteria"/>
</dbReference>
<dbReference type="HOGENOM" id="CLU_067069_0_0_6"/>
<dbReference type="UniPathway" id="UPA00070">
    <property type="reaction ID" value="UER00120"/>
</dbReference>
<dbReference type="Proteomes" id="UP000002493">
    <property type="component" value="Chromosome 1"/>
</dbReference>
<dbReference type="GO" id="GO:0005829">
    <property type="term" value="C:cytosol"/>
    <property type="evidence" value="ECO:0007669"/>
    <property type="project" value="TreeGrafter"/>
</dbReference>
<dbReference type="GO" id="GO:0004590">
    <property type="term" value="F:orotidine-5'-phosphate decarboxylase activity"/>
    <property type="evidence" value="ECO:0007669"/>
    <property type="project" value="UniProtKB-UniRule"/>
</dbReference>
<dbReference type="GO" id="GO:0006207">
    <property type="term" value="P:'de novo' pyrimidine nucleobase biosynthetic process"/>
    <property type="evidence" value="ECO:0007669"/>
    <property type="project" value="InterPro"/>
</dbReference>
<dbReference type="GO" id="GO:0044205">
    <property type="term" value="P:'de novo' UMP biosynthetic process"/>
    <property type="evidence" value="ECO:0007669"/>
    <property type="project" value="UniProtKB-UniRule"/>
</dbReference>
<dbReference type="CDD" id="cd04725">
    <property type="entry name" value="OMP_decarboxylase_like"/>
    <property type="match status" value="1"/>
</dbReference>
<dbReference type="FunFam" id="3.20.20.70:FF:000015">
    <property type="entry name" value="Orotidine 5'-phosphate decarboxylase"/>
    <property type="match status" value="1"/>
</dbReference>
<dbReference type="Gene3D" id="3.20.20.70">
    <property type="entry name" value="Aldolase class I"/>
    <property type="match status" value="1"/>
</dbReference>
<dbReference type="HAMAP" id="MF_01200_B">
    <property type="entry name" value="OMPdecase_type1_B"/>
    <property type="match status" value="1"/>
</dbReference>
<dbReference type="InterPro" id="IPR013785">
    <property type="entry name" value="Aldolase_TIM"/>
</dbReference>
<dbReference type="InterPro" id="IPR014732">
    <property type="entry name" value="OMPdecase"/>
</dbReference>
<dbReference type="InterPro" id="IPR018089">
    <property type="entry name" value="OMPdecase_AS"/>
</dbReference>
<dbReference type="InterPro" id="IPR047596">
    <property type="entry name" value="OMPdecase_bac"/>
</dbReference>
<dbReference type="InterPro" id="IPR001754">
    <property type="entry name" value="OMPdeCOase_dom"/>
</dbReference>
<dbReference type="InterPro" id="IPR011060">
    <property type="entry name" value="RibuloseP-bd_barrel"/>
</dbReference>
<dbReference type="NCBIfam" id="NF001273">
    <property type="entry name" value="PRK00230.1"/>
    <property type="match status" value="1"/>
</dbReference>
<dbReference type="NCBIfam" id="TIGR01740">
    <property type="entry name" value="pyrF"/>
    <property type="match status" value="1"/>
</dbReference>
<dbReference type="PANTHER" id="PTHR32119">
    <property type="entry name" value="OROTIDINE 5'-PHOSPHATE DECARBOXYLASE"/>
    <property type="match status" value="1"/>
</dbReference>
<dbReference type="PANTHER" id="PTHR32119:SF2">
    <property type="entry name" value="OROTIDINE 5'-PHOSPHATE DECARBOXYLASE"/>
    <property type="match status" value="1"/>
</dbReference>
<dbReference type="Pfam" id="PF00215">
    <property type="entry name" value="OMPdecase"/>
    <property type="match status" value="1"/>
</dbReference>
<dbReference type="SMART" id="SM00934">
    <property type="entry name" value="OMPdecase"/>
    <property type="match status" value="1"/>
</dbReference>
<dbReference type="SUPFAM" id="SSF51366">
    <property type="entry name" value="Ribulose-phoshate binding barrel"/>
    <property type="match status" value="1"/>
</dbReference>
<dbReference type="PROSITE" id="PS00156">
    <property type="entry name" value="OMPDECASE"/>
    <property type="match status" value="1"/>
</dbReference>
<keyword id="KW-0210">Decarboxylase</keyword>
<keyword id="KW-0456">Lyase</keyword>
<keyword id="KW-0665">Pyrimidine biosynthesis</keyword>
<accession>Q87N49</accession>
<sequence>MIDQKVIVALDYDNQADALAFVDRIDPASCRLKVGKEMFTLFGPDFVRELHKRGFSVFLDLKFHDIPNTCSKAVRAAAELGVWMVNVHASGGERMMTASREILEPYGKDRPLLIGVTVLTSMEQSDLAGIGLNVEPQEQVIRLATLTKNSGLDGVVCSAQESSLLKNELGKEFKLITPGIRPAGSDQGDQRRIMTPVDAIQAGSDYLVIGRPITQATDPAAVLKSINDSLASK</sequence>
<proteinExistence type="inferred from homology"/>
<comment type="function">
    <text evidence="1">Catalyzes the decarboxylation of orotidine 5'-monophosphate (OMP) to uridine 5'-monophosphate (UMP).</text>
</comment>
<comment type="catalytic activity">
    <reaction evidence="1">
        <text>orotidine 5'-phosphate + H(+) = UMP + CO2</text>
        <dbReference type="Rhea" id="RHEA:11596"/>
        <dbReference type="ChEBI" id="CHEBI:15378"/>
        <dbReference type="ChEBI" id="CHEBI:16526"/>
        <dbReference type="ChEBI" id="CHEBI:57538"/>
        <dbReference type="ChEBI" id="CHEBI:57865"/>
        <dbReference type="EC" id="4.1.1.23"/>
    </reaction>
</comment>
<comment type="pathway">
    <text evidence="1">Pyrimidine metabolism; UMP biosynthesis via de novo pathway; UMP from orotate: step 2/2.</text>
</comment>
<comment type="subunit">
    <text evidence="1">Homodimer.</text>
</comment>
<comment type="similarity">
    <text evidence="1">Belongs to the OMP decarboxylase family. Type 1 subfamily.</text>
</comment>
<gene>
    <name evidence="1" type="primary">pyrF</name>
    <name type="ordered locus">VP2026</name>
</gene>
<protein>
    <recommendedName>
        <fullName evidence="1">Orotidine 5'-phosphate decarboxylase</fullName>
        <ecNumber evidence="1">4.1.1.23</ecNumber>
    </recommendedName>
    <alternativeName>
        <fullName evidence="1">OMP decarboxylase</fullName>
        <shortName evidence="1">OMPDCase</shortName>
        <shortName evidence="1">OMPdecase</shortName>
    </alternativeName>
</protein>
<name>PYRF_VIBPA</name>
<feature type="chain" id="PRO_0000134597" description="Orotidine 5'-phosphate decarboxylase">
    <location>
        <begin position="1"/>
        <end position="233"/>
    </location>
</feature>
<feature type="active site" description="Proton donor" evidence="1">
    <location>
        <position position="62"/>
    </location>
</feature>
<feature type="binding site" evidence="1">
    <location>
        <position position="11"/>
    </location>
    <ligand>
        <name>substrate</name>
    </ligand>
</feature>
<feature type="binding site" evidence="1">
    <location>
        <position position="33"/>
    </location>
    <ligand>
        <name>substrate</name>
    </ligand>
</feature>
<feature type="binding site" evidence="1">
    <location>
        <begin position="60"/>
        <end position="69"/>
    </location>
    <ligand>
        <name>substrate</name>
    </ligand>
</feature>
<feature type="binding site" evidence="1">
    <location>
        <position position="120"/>
    </location>
    <ligand>
        <name>substrate</name>
    </ligand>
</feature>
<feature type="binding site" evidence="1">
    <location>
        <position position="181"/>
    </location>
    <ligand>
        <name>substrate</name>
    </ligand>
</feature>
<feature type="binding site" evidence="1">
    <location>
        <position position="190"/>
    </location>
    <ligand>
        <name>substrate</name>
    </ligand>
</feature>
<feature type="binding site" evidence="1">
    <location>
        <position position="210"/>
    </location>
    <ligand>
        <name>substrate</name>
    </ligand>
</feature>
<feature type="binding site" evidence="1">
    <location>
        <position position="211"/>
    </location>
    <ligand>
        <name>substrate</name>
    </ligand>
</feature>
<organism>
    <name type="scientific">Vibrio parahaemolyticus serotype O3:K6 (strain RIMD 2210633)</name>
    <dbReference type="NCBI Taxonomy" id="223926"/>
    <lineage>
        <taxon>Bacteria</taxon>
        <taxon>Pseudomonadati</taxon>
        <taxon>Pseudomonadota</taxon>
        <taxon>Gammaproteobacteria</taxon>
        <taxon>Vibrionales</taxon>
        <taxon>Vibrionaceae</taxon>
        <taxon>Vibrio</taxon>
    </lineage>
</organism>
<evidence type="ECO:0000255" key="1">
    <source>
        <dbReference type="HAMAP-Rule" id="MF_01200"/>
    </source>
</evidence>
<reference key="1">
    <citation type="journal article" date="2003" name="Lancet">
        <title>Genome sequence of Vibrio parahaemolyticus: a pathogenic mechanism distinct from that of V. cholerae.</title>
        <authorList>
            <person name="Makino K."/>
            <person name="Oshima K."/>
            <person name="Kurokawa K."/>
            <person name="Yokoyama K."/>
            <person name="Uda T."/>
            <person name="Tagomori K."/>
            <person name="Iijima Y."/>
            <person name="Najima M."/>
            <person name="Nakano M."/>
            <person name="Yamashita A."/>
            <person name="Kubota Y."/>
            <person name="Kimura S."/>
            <person name="Yasunaga T."/>
            <person name="Honda T."/>
            <person name="Shinagawa H."/>
            <person name="Hattori M."/>
            <person name="Iida T."/>
        </authorList>
    </citation>
    <scope>NUCLEOTIDE SEQUENCE [LARGE SCALE GENOMIC DNA]</scope>
    <source>
        <strain>RIMD 2210633</strain>
    </source>
</reference>